<organism>
    <name type="scientific">Acinetobacter baumannii (strain ATCC 17978 / DSM 105126 / CIP 53.77 / LMG 1025 / NCDC KC755 / 5377)</name>
    <dbReference type="NCBI Taxonomy" id="400667"/>
    <lineage>
        <taxon>Bacteria</taxon>
        <taxon>Pseudomonadati</taxon>
        <taxon>Pseudomonadota</taxon>
        <taxon>Gammaproteobacteria</taxon>
        <taxon>Moraxellales</taxon>
        <taxon>Moraxellaceae</taxon>
        <taxon>Acinetobacter</taxon>
        <taxon>Acinetobacter calcoaceticus/baumannii complex</taxon>
    </lineage>
</organism>
<proteinExistence type="inferred from homology"/>
<protein>
    <recommendedName>
        <fullName evidence="1">Large ribosomal subunit protein bL25</fullName>
    </recommendedName>
    <alternativeName>
        <fullName evidence="3">50S ribosomal protein L25</fullName>
    </alternativeName>
</protein>
<keyword id="KW-0687">Ribonucleoprotein</keyword>
<keyword id="KW-0689">Ribosomal protein</keyword>
<keyword id="KW-0694">RNA-binding</keyword>
<keyword id="KW-0699">rRNA-binding</keyword>
<feature type="chain" id="PRO_1000142572" description="Large ribosomal subunit protein bL25">
    <location>
        <begin position="1"/>
        <end position="98"/>
    </location>
</feature>
<feature type="region of interest" description="Disordered" evidence="2">
    <location>
        <begin position="1"/>
        <end position="23"/>
    </location>
</feature>
<name>RL25_ACIBT</name>
<dbReference type="EMBL" id="CP000521">
    <property type="protein sequence ID" value="ABO11266.2"/>
    <property type="molecule type" value="Genomic_DNA"/>
</dbReference>
<dbReference type="RefSeq" id="WP_001273421.1">
    <property type="nucleotide sequence ID" value="NZ_CP053098.1"/>
</dbReference>
<dbReference type="SMR" id="A3M2X2"/>
<dbReference type="GeneID" id="92892759"/>
<dbReference type="KEGG" id="acb:A1S_0828"/>
<dbReference type="HOGENOM" id="CLU_137946_0_0_6"/>
<dbReference type="GO" id="GO:0022625">
    <property type="term" value="C:cytosolic large ribosomal subunit"/>
    <property type="evidence" value="ECO:0007669"/>
    <property type="project" value="TreeGrafter"/>
</dbReference>
<dbReference type="GO" id="GO:0008097">
    <property type="term" value="F:5S rRNA binding"/>
    <property type="evidence" value="ECO:0007669"/>
    <property type="project" value="InterPro"/>
</dbReference>
<dbReference type="GO" id="GO:0003735">
    <property type="term" value="F:structural constituent of ribosome"/>
    <property type="evidence" value="ECO:0007669"/>
    <property type="project" value="InterPro"/>
</dbReference>
<dbReference type="GO" id="GO:0006412">
    <property type="term" value="P:translation"/>
    <property type="evidence" value="ECO:0007669"/>
    <property type="project" value="UniProtKB-UniRule"/>
</dbReference>
<dbReference type="CDD" id="cd00495">
    <property type="entry name" value="Ribosomal_L25_TL5_CTC"/>
    <property type="match status" value="1"/>
</dbReference>
<dbReference type="Gene3D" id="2.40.240.10">
    <property type="entry name" value="Ribosomal Protein L25, Chain P"/>
    <property type="match status" value="1"/>
</dbReference>
<dbReference type="HAMAP" id="MF_01336">
    <property type="entry name" value="Ribosomal_bL25"/>
    <property type="match status" value="1"/>
</dbReference>
<dbReference type="InterPro" id="IPR020056">
    <property type="entry name" value="Rbsml_bL25/Gln-tRNA_synth_N"/>
</dbReference>
<dbReference type="InterPro" id="IPR011035">
    <property type="entry name" value="Ribosomal_bL25/Gln-tRNA_synth"/>
</dbReference>
<dbReference type="InterPro" id="IPR020055">
    <property type="entry name" value="Ribosomal_bL25_short"/>
</dbReference>
<dbReference type="InterPro" id="IPR029751">
    <property type="entry name" value="Ribosomal_L25_dom"/>
</dbReference>
<dbReference type="InterPro" id="IPR020930">
    <property type="entry name" value="Ribosomal_uL5_bac-type"/>
</dbReference>
<dbReference type="NCBIfam" id="NF004612">
    <property type="entry name" value="PRK05943.1"/>
    <property type="match status" value="1"/>
</dbReference>
<dbReference type="PANTHER" id="PTHR33284">
    <property type="entry name" value="RIBOSOMAL PROTEIN L25/GLN-TRNA SYNTHETASE, ANTI-CODON-BINDING DOMAIN-CONTAINING PROTEIN"/>
    <property type="match status" value="1"/>
</dbReference>
<dbReference type="PANTHER" id="PTHR33284:SF1">
    <property type="entry name" value="RIBOSOMAL PROTEIN L25_GLN-TRNA SYNTHETASE, ANTI-CODON-BINDING DOMAIN-CONTAINING PROTEIN"/>
    <property type="match status" value="1"/>
</dbReference>
<dbReference type="Pfam" id="PF01386">
    <property type="entry name" value="Ribosomal_L25p"/>
    <property type="match status" value="1"/>
</dbReference>
<dbReference type="SUPFAM" id="SSF50715">
    <property type="entry name" value="Ribosomal protein L25-like"/>
    <property type="match status" value="1"/>
</dbReference>
<reference key="1">
    <citation type="journal article" date="2007" name="Genes Dev.">
        <title>New insights into Acinetobacter baumannii pathogenesis revealed by high-density pyrosequencing and transposon mutagenesis.</title>
        <authorList>
            <person name="Smith M.G."/>
            <person name="Gianoulis T.A."/>
            <person name="Pukatzki S."/>
            <person name="Mekalanos J.J."/>
            <person name="Ornston L.N."/>
            <person name="Gerstein M."/>
            <person name="Snyder M."/>
        </authorList>
    </citation>
    <scope>NUCLEOTIDE SEQUENCE [LARGE SCALE GENOMIC DNA]</scope>
    <source>
        <strain>ATCC 17978 / DSM 105126 / CIP 53.77 / LMG 1025 / NCDC KC755 / 5377</strain>
    </source>
</reference>
<accession>A3M2X2</accession>
<sequence>MANFVLNAQARAEDKQGKGASRRLRRESLVPAIIYGGNAEPVAVTLELRELVKALESNAFFEEVVEIKVGDKVENVKIQALQRHPAKNTPMHADFKRA</sequence>
<gene>
    <name evidence="1" type="primary">rplY</name>
    <name type="ordered locus">A1S_0828</name>
</gene>
<evidence type="ECO:0000255" key="1">
    <source>
        <dbReference type="HAMAP-Rule" id="MF_01336"/>
    </source>
</evidence>
<evidence type="ECO:0000256" key="2">
    <source>
        <dbReference type="SAM" id="MobiDB-lite"/>
    </source>
</evidence>
<evidence type="ECO:0000305" key="3"/>
<comment type="function">
    <text evidence="1">This is one of the proteins that binds to the 5S RNA in the ribosome where it forms part of the central protuberance.</text>
</comment>
<comment type="subunit">
    <text evidence="1">Part of the 50S ribosomal subunit; part of the 5S rRNA/L5/L18/L25 subcomplex. Contacts the 5S rRNA. Binds to the 5S rRNA independently of L5 and L18.</text>
</comment>
<comment type="similarity">
    <text evidence="1">Belongs to the bacterial ribosomal protein bL25 family.</text>
</comment>